<dbReference type="EMBL" id="BC068348">
    <property type="protein sequence ID" value="AAH68348.1"/>
    <property type="molecule type" value="mRNA"/>
</dbReference>
<dbReference type="RefSeq" id="NP_999914.1">
    <property type="nucleotide sequence ID" value="NM_214749.1"/>
</dbReference>
<dbReference type="SMR" id="Q6NV18"/>
<dbReference type="FunCoup" id="Q6NV18">
    <property type="interactions" value="534"/>
</dbReference>
<dbReference type="STRING" id="7955.ENSDARP00000124126"/>
<dbReference type="PaxDb" id="7955-ENSDARP00000124126"/>
<dbReference type="GeneID" id="406593"/>
<dbReference type="KEGG" id="dre:406593"/>
<dbReference type="AGR" id="ZFIN:ZDB-GENE-040426-2515"/>
<dbReference type="CTD" id="79840"/>
<dbReference type="ZFIN" id="ZDB-GENE-040426-2515">
    <property type="gene designation" value="nhej1"/>
</dbReference>
<dbReference type="eggNOG" id="ENOG502QWAX">
    <property type="taxonomic scope" value="Eukaryota"/>
</dbReference>
<dbReference type="InParanoid" id="Q6NV18"/>
<dbReference type="OrthoDB" id="2155935at2759"/>
<dbReference type="PhylomeDB" id="Q6NV18"/>
<dbReference type="PRO" id="PR:Q6NV18"/>
<dbReference type="Proteomes" id="UP000000437">
    <property type="component" value="Chromosome 6"/>
</dbReference>
<dbReference type="GO" id="GO:0032807">
    <property type="term" value="C:DNA ligase IV complex"/>
    <property type="evidence" value="ECO:0000318"/>
    <property type="project" value="GO_Central"/>
</dbReference>
<dbReference type="GO" id="GO:0070419">
    <property type="term" value="C:nonhomologous end joining complex"/>
    <property type="evidence" value="ECO:0000250"/>
    <property type="project" value="UniProtKB"/>
</dbReference>
<dbReference type="GO" id="GO:0035861">
    <property type="term" value="C:site of double-strand break"/>
    <property type="evidence" value="ECO:0000250"/>
    <property type="project" value="UniProtKB"/>
</dbReference>
<dbReference type="GO" id="GO:0045027">
    <property type="term" value="F:DNA end binding"/>
    <property type="evidence" value="ECO:0000250"/>
    <property type="project" value="UniProtKB"/>
</dbReference>
<dbReference type="GO" id="GO:0006303">
    <property type="term" value="P:double-strand break repair via nonhomologous end joining"/>
    <property type="evidence" value="ECO:0000250"/>
    <property type="project" value="UniProtKB"/>
</dbReference>
<dbReference type="GO" id="GO:0033152">
    <property type="term" value="P:immunoglobulin V(D)J recombination"/>
    <property type="evidence" value="ECO:0000250"/>
    <property type="project" value="UniProtKB"/>
</dbReference>
<dbReference type="GO" id="GO:0000723">
    <property type="term" value="P:telomere maintenance"/>
    <property type="evidence" value="ECO:0000250"/>
    <property type="project" value="UniProtKB"/>
</dbReference>
<dbReference type="CDD" id="cd22285">
    <property type="entry name" value="HD_XLF_N"/>
    <property type="match status" value="1"/>
</dbReference>
<dbReference type="FunFam" id="1.10.287.450:FF:000003">
    <property type="entry name" value="Non-homologous end-joining factor 1"/>
    <property type="match status" value="1"/>
</dbReference>
<dbReference type="FunFam" id="2.170.210.10:FF:000001">
    <property type="entry name" value="Non-homologous end-joining factor 1"/>
    <property type="match status" value="1"/>
</dbReference>
<dbReference type="Gene3D" id="2.170.210.10">
    <property type="entry name" value="DNA double-strand break repair and VJ recombination XRCC4, N-terminal"/>
    <property type="match status" value="1"/>
</dbReference>
<dbReference type="Gene3D" id="1.10.287.450">
    <property type="entry name" value="Helix hairpin bin"/>
    <property type="match status" value="1"/>
</dbReference>
<dbReference type="InterPro" id="IPR052287">
    <property type="entry name" value="NHEJ_factor"/>
</dbReference>
<dbReference type="InterPro" id="IPR053829">
    <property type="entry name" value="XLF-like_CC"/>
</dbReference>
<dbReference type="InterPro" id="IPR015381">
    <property type="entry name" value="XLF-like_N"/>
</dbReference>
<dbReference type="InterPro" id="IPR038051">
    <property type="entry name" value="XRCC4-like_N_sf"/>
</dbReference>
<dbReference type="PANTHER" id="PTHR32235">
    <property type="entry name" value="NON-HOMOLOGOUS END-JOINING FACTOR 1"/>
    <property type="match status" value="1"/>
</dbReference>
<dbReference type="PANTHER" id="PTHR32235:SF1">
    <property type="entry name" value="NON-HOMOLOGOUS END-JOINING FACTOR 1"/>
    <property type="match status" value="1"/>
</dbReference>
<dbReference type="Pfam" id="PF09302">
    <property type="entry name" value="XLF"/>
    <property type="match status" value="1"/>
</dbReference>
<dbReference type="Pfam" id="PF21928">
    <property type="entry name" value="XLF_CC"/>
    <property type="match status" value="1"/>
</dbReference>
<proteinExistence type="evidence at transcript level"/>
<comment type="function">
    <text evidence="1 2">DNA repair protein involved in DNA non-homologous end joining (NHEJ); it is required for double-strand break (DSB) repair and V(D)J recombination and is also involved in telomere maintenance. Plays a key role in NHEJ by promoting the ligation of various mismatched and non-cohesive ends. In some studies, has been shown to associate with xrcc4 to form alternating helical filaments that bridge DNA and act like a bandage, holding together the broken DNA until it is repaired. Alternatively, it has also been shown that rather than forming filaments, a single nhej1 dimer interacts through both head domains with xrcc4 to promote the close alignment of DNA ends. The xrcc4-nhej1/xlf subcomplex binds to the DNA fragments of a DSB in a highly diffusive manner and robustly bridges two independent DNA molecules, holding the broken DNA fragments in close proximity to one other. The mobility of the bridges ensures that the ends remain accessible for further processing by other repair factors.</text>
</comment>
<comment type="subunit">
    <text evidence="2">Homodimer. Interacts with xrcc4; the interaction is direct and is mediated via a head-to-head interaction between N-terminal head regions. Component of the core long-range non-homologous end joining (NHEJ) complex (also named DNA-PK complex) composed of prkdc/DNA-PKcs, lig4, xrcc4, xrcc6/Ku70, xrcc5/Ku80 and nhej1/xlf.</text>
</comment>
<comment type="subcellular location">
    <subcellularLocation>
        <location evidence="2">Nucleus</location>
    </subcellularLocation>
    <subcellularLocation>
        <location evidence="2">Chromosome</location>
    </subcellularLocation>
    <text evidence="2">Localizes to site of double-strand breaks.</text>
</comment>
<comment type="domain">
    <text evidence="2">The coiled-coil region mediates homodimerization.</text>
</comment>
<comment type="domain">
    <text evidence="2">The Leu-lock (Leu-114) site inserts into a hydrophobic pocket in xrcc4.</text>
</comment>
<comment type="domain">
    <text evidence="1">The XLM motif (also called the KBM motif or KBMX motif) and the interior region of the C-terminal tail preceding the XLM motif are essential for DNA end joining. The sequence of the C-terminal tail is not critical for its role in end joining but it must be sufficiently long to interact with xrcc4 and to stabilize the interaction of xrcc4 with lig4. A single XLM motif and C-terminal tail is sufficient to promote end joining.</text>
</comment>
<comment type="similarity">
    <text evidence="4">Belongs to the XRCC4-XLF family. XLF subfamily.</text>
</comment>
<sequence length="309" mass="34182">MEAVLSALPWVPVNISGSDLLAKAWFGDSQYRVLLTDLSTVWEEEMSTDDIQSRAQDLNKRLRAPAQAFFSHLCSVARPCFSGLDEDQISAAQAALEQHGESLTVKLKSELAGLPFYWEFRCTTTPVAVVCRQLVRPLLAMTLVLQRQAEDLAALLARKDAEIQDYQENGAVLSRARLQTEPFEVHQYKENFITQILPQMNVTLDSLGFDSELQALYMAVNSGKTGRKRKHSPDSSPAAQENHITDHQHISESTDVGPSLASQEHNNAKESGRSQVANSQQTLPLSSTAGSEDRSTSRAKKKKAVGLFR</sequence>
<protein>
    <recommendedName>
        <fullName>Non-homologous end-joining factor 1</fullName>
    </recommendedName>
    <alternativeName>
        <fullName>Protein cernunnos</fullName>
    </alternativeName>
    <alternativeName>
        <fullName>XRCC4-like factor</fullName>
    </alternativeName>
</protein>
<evidence type="ECO:0000250" key="1">
    <source>
        <dbReference type="UniProtKB" id="A0A1L8ENT6"/>
    </source>
</evidence>
<evidence type="ECO:0000250" key="2">
    <source>
        <dbReference type="UniProtKB" id="Q9H9Q4"/>
    </source>
</evidence>
<evidence type="ECO:0000256" key="3">
    <source>
        <dbReference type="SAM" id="MobiDB-lite"/>
    </source>
</evidence>
<evidence type="ECO:0000305" key="4"/>
<accession>Q6NV18</accession>
<name>NHEJ1_DANRE</name>
<feature type="chain" id="PRO_0000228657" description="Non-homologous end-joining factor 1">
    <location>
        <begin position="1"/>
        <end position="309"/>
    </location>
</feature>
<feature type="region of interest" description="Globular head" evidence="2">
    <location>
        <begin position="1"/>
        <end position="134"/>
    </location>
</feature>
<feature type="region of interest" description="Disordered" evidence="3">
    <location>
        <begin position="223"/>
        <end position="309"/>
    </location>
</feature>
<feature type="region of interest" description="C-terminal tail" evidence="1">
    <location>
        <begin position="223"/>
        <end position="298"/>
    </location>
</feature>
<feature type="short sequence motif" description="XLM" evidence="2">
    <location>
        <begin position="299"/>
        <end position="309"/>
    </location>
</feature>
<feature type="compositionally biased region" description="Basic and acidic residues" evidence="3">
    <location>
        <begin position="243"/>
        <end position="252"/>
    </location>
</feature>
<feature type="compositionally biased region" description="Polar residues" evidence="3">
    <location>
        <begin position="253"/>
        <end position="265"/>
    </location>
</feature>
<feature type="compositionally biased region" description="Polar residues" evidence="3">
    <location>
        <begin position="273"/>
        <end position="290"/>
    </location>
</feature>
<feature type="compositionally biased region" description="Basic residues" evidence="3">
    <location>
        <begin position="297"/>
        <end position="309"/>
    </location>
</feature>
<feature type="site" description="Leu-lock" evidence="2">
    <location>
        <position position="114"/>
    </location>
</feature>
<reference key="1">
    <citation type="submission" date="2004-04" db="EMBL/GenBank/DDBJ databases">
        <authorList>
            <consortium name="NIH - Zebrafish Gene Collection (ZGC) project"/>
        </authorList>
    </citation>
    <scope>NUCLEOTIDE SEQUENCE [LARGE SCALE MRNA]</scope>
    <source>
        <tissue>Kidney</tissue>
    </source>
</reference>
<organism>
    <name type="scientific">Danio rerio</name>
    <name type="common">Zebrafish</name>
    <name type="synonym">Brachydanio rerio</name>
    <dbReference type="NCBI Taxonomy" id="7955"/>
    <lineage>
        <taxon>Eukaryota</taxon>
        <taxon>Metazoa</taxon>
        <taxon>Chordata</taxon>
        <taxon>Craniata</taxon>
        <taxon>Vertebrata</taxon>
        <taxon>Euteleostomi</taxon>
        <taxon>Actinopterygii</taxon>
        <taxon>Neopterygii</taxon>
        <taxon>Teleostei</taxon>
        <taxon>Ostariophysi</taxon>
        <taxon>Cypriniformes</taxon>
        <taxon>Danionidae</taxon>
        <taxon>Danioninae</taxon>
        <taxon>Danio</taxon>
    </lineage>
</organism>
<gene>
    <name type="primary">nhej1</name>
    <name type="synonym">xlf</name>
    <name type="ORF">zgc:85657</name>
</gene>
<keyword id="KW-0158">Chromosome</keyword>
<keyword id="KW-0227">DNA damage</keyword>
<keyword id="KW-0234">DNA repair</keyword>
<keyword id="KW-0238">DNA-binding</keyword>
<keyword id="KW-0539">Nucleus</keyword>
<keyword id="KW-1185">Reference proteome</keyword>